<dbReference type="EC" id="6.3.1.21" evidence="1"/>
<dbReference type="EMBL" id="CP000077">
    <property type="protein sequence ID" value="AAY79633.1"/>
    <property type="molecule type" value="Genomic_DNA"/>
</dbReference>
<dbReference type="RefSeq" id="WP_011277134.1">
    <property type="nucleotide sequence ID" value="NC_007181.1"/>
</dbReference>
<dbReference type="SMR" id="Q4JC46"/>
<dbReference type="STRING" id="330779.Saci_0214"/>
<dbReference type="GeneID" id="14550742"/>
<dbReference type="GeneID" id="78440566"/>
<dbReference type="KEGG" id="sai:Saci_0214"/>
<dbReference type="PATRIC" id="fig|330779.12.peg.206"/>
<dbReference type="eggNOG" id="arCOG01598">
    <property type="taxonomic scope" value="Archaea"/>
</dbReference>
<dbReference type="HOGENOM" id="CLU_011534_1_3_2"/>
<dbReference type="UniPathway" id="UPA00074">
    <property type="reaction ID" value="UER00127"/>
</dbReference>
<dbReference type="Proteomes" id="UP000001018">
    <property type="component" value="Chromosome"/>
</dbReference>
<dbReference type="GO" id="GO:0005829">
    <property type="term" value="C:cytosol"/>
    <property type="evidence" value="ECO:0007669"/>
    <property type="project" value="TreeGrafter"/>
</dbReference>
<dbReference type="GO" id="GO:0005524">
    <property type="term" value="F:ATP binding"/>
    <property type="evidence" value="ECO:0007669"/>
    <property type="project" value="UniProtKB-UniRule"/>
</dbReference>
<dbReference type="GO" id="GO:0000287">
    <property type="term" value="F:magnesium ion binding"/>
    <property type="evidence" value="ECO:0007669"/>
    <property type="project" value="InterPro"/>
</dbReference>
<dbReference type="GO" id="GO:0043815">
    <property type="term" value="F:phosphoribosylglycinamide formyltransferase 2 activity"/>
    <property type="evidence" value="ECO:0007669"/>
    <property type="project" value="UniProtKB-UniRule"/>
</dbReference>
<dbReference type="GO" id="GO:0004644">
    <property type="term" value="F:phosphoribosylglycinamide formyltransferase activity"/>
    <property type="evidence" value="ECO:0007669"/>
    <property type="project" value="InterPro"/>
</dbReference>
<dbReference type="GO" id="GO:0006189">
    <property type="term" value="P:'de novo' IMP biosynthetic process"/>
    <property type="evidence" value="ECO:0007669"/>
    <property type="project" value="UniProtKB-UniRule"/>
</dbReference>
<dbReference type="Gene3D" id="3.40.50.20">
    <property type="match status" value="1"/>
</dbReference>
<dbReference type="Gene3D" id="3.30.1490.20">
    <property type="entry name" value="ATP-grasp fold, A domain"/>
    <property type="match status" value="1"/>
</dbReference>
<dbReference type="Gene3D" id="3.30.470.20">
    <property type="entry name" value="ATP-grasp fold, B domain"/>
    <property type="match status" value="1"/>
</dbReference>
<dbReference type="HAMAP" id="MF_01643">
    <property type="entry name" value="PurT"/>
    <property type="match status" value="1"/>
</dbReference>
<dbReference type="InterPro" id="IPR011761">
    <property type="entry name" value="ATP-grasp"/>
</dbReference>
<dbReference type="InterPro" id="IPR003135">
    <property type="entry name" value="ATP-grasp_carboxylate-amine"/>
</dbReference>
<dbReference type="InterPro" id="IPR013815">
    <property type="entry name" value="ATP_grasp_subdomain_1"/>
</dbReference>
<dbReference type="InterPro" id="IPR016185">
    <property type="entry name" value="PreATP-grasp_dom_sf"/>
</dbReference>
<dbReference type="InterPro" id="IPR005862">
    <property type="entry name" value="PurT"/>
</dbReference>
<dbReference type="InterPro" id="IPR054350">
    <property type="entry name" value="PurT/PurK_preATP-grasp"/>
</dbReference>
<dbReference type="InterPro" id="IPR048740">
    <property type="entry name" value="PurT_C"/>
</dbReference>
<dbReference type="NCBIfam" id="NF006766">
    <property type="entry name" value="PRK09288.1"/>
    <property type="match status" value="1"/>
</dbReference>
<dbReference type="PANTHER" id="PTHR43055">
    <property type="entry name" value="FORMATE-DEPENDENT PHOSPHORIBOSYLGLYCINAMIDE FORMYLTRANSFERASE"/>
    <property type="match status" value="1"/>
</dbReference>
<dbReference type="PANTHER" id="PTHR43055:SF1">
    <property type="entry name" value="FORMATE-DEPENDENT PHOSPHORIBOSYLGLYCINAMIDE FORMYLTRANSFERASE"/>
    <property type="match status" value="1"/>
</dbReference>
<dbReference type="Pfam" id="PF02222">
    <property type="entry name" value="ATP-grasp"/>
    <property type="match status" value="1"/>
</dbReference>
<dbReference type="Pfam" id="PF21244">
    <property type="entry name" value="PurT_C"/>
    <property type="match status" value="1"/>
</dbReference>
<dbReference type="Pfam" id="PF22660">
    <property type="entry name" value="RS_preATP-grasp-like"/>
    <property type="match status" value="1"/>
</dbReference>
<dbReference type="SUPFAM" id="SSF56059">
    <property type="entry name" value="Glutathione synthetase ATP-binding domain-like"/>
    <property type="match status" value="1"/>
</dbReference>
<dbReference type="SUPFAM" id="SSF52440">
    <property type="entry name" value="PreATP-grasp domain"/>
    <property type="match status" value="1"/>
</dbReference>
<dbReference type="PROSITE" id="PS50975">
    <property type="entry name" value="ATP_GRASP"/>
    <property type="match status" value="1"/>
</dbReference>
<name>PURT_SULAC</name>
<keyword id="KW-0067">ATP-binding</keyword>
<keyword id="KW-0436">Ligase</keyword>
<keyword id="KW-0460">Magnesium</keyword>
<keyword id="KW-0479">Metal-binding</keyword>
<keyword id="KW-0547">Nucleotide-binding</keyword>
<keyword id="KW-0658">Purine biosynthesis</keyword>
<keyword id="KW-1185">Reference proteome</keyword>
<sequence>MEIGTPLFEGAKKLLWLGGGELGKEMVIEAQRMGVETVVIDRYDLAPAMHVAHRKYVVNMHDGGAIESIIRKERPDAVIAEIEAINTETLSKIEMDGIKVMPNARAVKICMDRIELRRFAAEKVKVPTTAYGFATSPEEVKKMCKDVGYPCIIKPQMSSSGHGHEVIYDESQVEEKFKEALTHARGKSKTVIVEEYVKIDRELTVLTYRYPLSSGGVATKTIYPVEHQRPQGVYHYIESWHPATVSQDVISKASEYATKVVNELGGFGIFGVEIMIAGNRVLFNEVAPRPHDTGLVTLVSSDISEFQVHVRSALGLPTPDVKVVTPAAAHVILASGEKWAPKYINVDKALEIPGVQVRLFGKPVTYNERRMGIVLATGNSVEEAKEKVRKASALILVS</sequence>
<organism>
    <name type="scientific">Sulfolobus acidocaldarius (strain ATCC 33909 / DSM 639 / JCM 8929 / NBRC 15157 / NCIMB 11770)</name>
    <dbReference type="NCBI Taxonomy" id="330779"/>
    <lineage>
        <taxon>Archaea</taxon>
        <taxon>Thermoproteota</taxon>
        <taxon>Thermoprotei</taxon>
        <taxon>Sulfolobales</taxon>
        <taxon>Sulfolobaceae</taxon>
        <taxon>Sulfolobus</taxon>
    </lineage>
</organism>
<protein>
    <recommendedName>
        <fullName evidence="1">Formate-dependent phosphoribosylglycinamide formyltransferase</fullName>
        <ecNumber evidence="1">6.3.1.21</ecNumber>
    </recommendedName>
    <alternativeName>
        <fullName evidence="1">5'-phosphoribosylglycinamide transformylase 2</fullName>
    </alternativeName>
    <alternativeName>
        <fullName evidence="1">Formate-dependent GAR transformylase</fullName>
    </alternativeName>
    <alternativeName>
        <fullName evidence="1">GAR transformylase 2</fullName>
        <shortName evidence="1">GART 2</shortName>
    </alternativeName>
    <alternativeName>
        <fullName evidence="1">Non-folate glycinamide ribonucleotide transformylase</fullName>
    </alternativeName>
    <alternativeName>
        <fullName evidence="1">Phosphoribosylglycinamide formyltransferase 2</fullName>
    </alternativeName>
</protein>
<evidence type="ECO:0000255" key="1">
    <source>
        <dbReference type="HAMAP-Rule" id="MF_01643"/>
    </source>
</evidence>
<gene>
    <name evidence="1" type="primary">purT</name>
    <name type="ordered locus">Saci_0214</name>
</gene>
<comment type="function">
    <text evidence="1">Involved in the de novo purine biosynthesis. Catalyzes the transfer of formate to 5-phospho-ribosyl-glycinamide (GAR), producing 5-phospho-ribosyl-N-formylglycinamide (FGAR). Formate is provided by PurU via hydrolysis of 10-formyl-tetrahydrofolate.</text>
</comment>
<comment type="catalytic activity">
    <reaction evidence="1">
        <text>N(1)-(5-phospho-beta-D-ribosyl)glycinamide + formate + ATP = N(2)-formyl-N(1)-(5-phospho-beta-D-ribosyl)glycinamide + ADP + phosphate + H(+)</text>
        <dbReference type="Rhea" id="RHEA:24829"/>
        <dbReference type="ChEBI" id="CHEBI:15378"/>
        <dbReference type="ChEBI" id="CHEBI:15740"/>
        <dbReference type="ChEBI" id="CHEBI:30616"/>
        <dbReference type="ChEBI" id="CHEBI:43474"/>
        <dbReference type="ChEBI" id="CHEBI:143788"/>
        <dbReference type="ChEBI" id="CHEBI:147286"/>
        <dbReference type="ChEBI" id="CHEBI:456216"/>
        <dbReference type="EC" id="6.3.1.21"/>
    </reaction>
    <physiologicalReaction direction="left-to-right" evidence="1">
        <dbReference type="Rhea" id="RHEA:24830"/>
    </physiologicalReaction>
</comment>
<comment type="pathway">
    <text evidence="1">Purine metabolism; IMP biosynthesis via de novo pathway; N(2)-formyl-N(1)-(5-phospho-D-ribosyl)glycinamide from N(1)-(5-phospho-D-ribosyl)glycinamide (formate route): step 1/1.</text>
</comment>
<comment type="subunit">
    <text evidence="1">Homodimer.</text>
</comment>
<comment type="similarity">
    <text evidence="1">Belongs to the PurK/PurT family.</text>
</comment>
<proteinExistence type="inferred from homology"/>
<feature type="chain" id="PRO_0000319287" description="Formate-dependent phosphoribosylglycinamide formyltransferase">
    <location>
        <begin position="1"/>
        <end position="398"/>
    </location>
</feature>
<feature type="domain" description="ATP-grasp" evidence="1">
    <location>
        <begin position="118"/>
        <end position="314"/>
    </location>
</feature>
<feature type="binding site" evidence="1">
    <location>
        <begin position="21"/>
        <end position="22"/>
    </location>
    <ligand>
        <name>N(1)-(5-phospho-beta-D-ribosyl)glycinamide</name>
        <dbReference type="ChEBI" id="CHEBI:143788"/>
    </ligand>
</feature>
<feature type="binding site" evidence="1">
    <location>
        <position position="81"/>
    </location>
    <ligand>
        <name>N(1)-(5-phospho-beta-D-ribosyl)glycinamide</name>
        <dbReference type="ChEBI" id="CHEBI:143788"/>
    </ligand>
</feature>
<feature type="binding site" evidence="1">
    <location>
        <position position="113"/>
    </location>
    <ligand>
        <name>ATP</name>
        <dbReference type="ChEBI" id="CHEBI:30616"/>
    </ligand>
</feature>
<feature type="binding site" evidence="1">
    <location>
        <position position="154"/>
    </location>
    <ligand>
        <name>ATP</name>
        <dbReference type="ChEBI" id="CHEBI:30616"/>
    </ligand>
</feature>
<feature type="binding site" evidence="1">
    <location>
        <begin position="194"/>
        <end position="197"/>
    </location>
    <ligand>
        <name>ATP</name>
        <dbReference type="ChEBI" id="CHEBI:30616"/>
    </ligand>
</feature>
<feature type="binding site" evidence="1">
    <location>
        <position position="202"/>
    </location>
    <ligand>
        <name>ATP</name>
        <dbReference type="ChEBI" id="CHEBI:30616"/>
    </ligand>
</feature>
<feature type="binding site" evidence="1">
    <location>
        <position position="273"/>
    </location>
    <ligand>
        <name>Mg(2+)</name>
        <dbReference type="ChEBI" id="CHEBI:18420"/>
    </ligand>
</feature>
<feature type="binding site" evidence="1">
    <location>
        <position position="285"/>
    </location>
    <ligand>
        <name>Mg(2+)</name>
        <dbReference type="ChEBI" id="CHEBI:18420"/>
    </ligand>
</feature>
<feature type="binding site" evidence="1">
    <location>
        <position position="292"/>
    </location>
    <ligand>
        <name>N(1)-(5-phospho-beta-D-ribosyl)glycinamide</name>
        <dbReference type="ChEBI" id="CHEBI:143788"/>
    </ligand>
</feature>
<feature type="binding site" evidence="1">
    <location>
        <position position="362"/>
    </location>
    <ligand>
        <name>N(1)-(5-phospho-beta-D-ribosyl)glycinamide</name>
        <dbReference type="ChEBI" id="CHEBI:143788"/>
    </ligand>
</feature>
<feature type="binding site" evidence="1">
    <location>
        <begin position="369"/>
        <end position="370"/>
    </location>
    <ligand>
        <name>N(1)-(5-phospho-beta-D-ribosyl)glycinamide</name>
        <dbReference type="ChEBI" id="CHEBI:143788"/>
    </ligand>
</feature>
<reference key="1">
    <citation type="journal article" date="2005" name="J. Bacteriol.">
        <title>The genome of Sulfolobus acidocaldarius, a model organism of the Crenarchaeota.</title>
        <authorList>
            <person name="Chen L."/>
            <person name="Bruegger K."/>
            <person name="Skovgaard M."/>
            <person name="Redder P."/>
            <person name="She Q."/>
            <person name="Torarinsson E."/>
            <person name="Greve B."/>
            <person name="Awayez M."/>
            <person name="Zibat A."/>
            <person name="Klenk H.-P."/>
            <person name="Garrett R.A."/>
        </authorList>
    </citation>
    <scope>NUCLEOTIDE SEQUENCE [LARGE SCALE GENOMIC DNA]</scope>
    <source>
        <strain>ATCC 33909 / DSM 639 / JCM 8929 / NBRC 15157 / NCIMB 11770</strain>
    </source>
</reference>
<accession>Q4JC46</accession>